<organism>
    <name type="scientific">Nitrobacter hamburgensis (strain DSM 10229 / NCIMB 13809 / X14)</name>
    <dbReference type="NCBI Taxonomy" id="323097"/>
    <lineage>
        <taxon>Bacteria</taxon>
        <taxon>Pseudomonadati</taxon>
        <taxon>Pseudomonadota</taxon>
        <taxon>Alphaproteobacteria</taxon>
        <taxon>Hyphomicrobiales</taxon>
        <taxon>Nitrobacteraceae</taxon>
        <taxon>Nitrobacter</taxon>
    </lineage>
</organism>
<sequence>MTRIDAHGLKIAPVLFDFIAREATPRTGIAPDAFWAGLAAIVRDLGPRNRELLAVRDTLQAQIDGWHRANKSRPFDMAAYTAFLKEIGYLLPEPATHAVETANIDDEIGKICGPQLVVPLTNARYALNAANARWGSLYDALYGTDAIAHEANEARGYDKARGDKVIAKAKAFLDSAAPLSAGSHADVAGYSVVNGHLSAKLRSGDATGLKTIAQFAGYQGAADAPSAILLVNHGLHIDIRIDRADRIGKDDPAGVADVIIEAAISTILDMEDSVAAVDADDKVLVYRNTLGLMNGTLTDTFEKGGKTVTRALNADRIYTSANGKEIALHGRSLLLMRNVGHHMVTDAVLDENGAEIPEGMLDAAVSSLLAIHDLMGISKTRNSRTGSVYIVKPKMHGPDEVALTCELFARVETMLGLPENTLKIGIMDEERRTTVNLKTCIQNASKRVCFINTGFLDRTGDEIHTSMEAGPMIRKNEMKAQPWMRAYEDWNVDIGLIDGLPGHAQIGKGMWAAPDRMADMLAQKVDHPQAGATTAWVPSPTAATLHALHYHQVDVLKQQQELKAGGQRAKLSDILTVPVSQSNWAPDDVRLEIDNNCQGILGYVVRWIDQGVGCSKVPDIHDVGLMEDRATLRISSQHLANWLHQNVVTSDQVMDSLKRMAVVVDKQNAGDPLYTPMAPTFDGVAFKAACDLVFKGREQPNGYTEYILTERRRQAKAESKGESEAAG</sequence>
<protein>
    <recommendedName>
        <fullName evidence="1">Malate synthase G</fullName>
        <ecNumber evidence="1">2.3.3.9</ecNumber>
    </recommendedName>
</protein>
<reference key="1">
    <citation type="submission" date="2006-03" db="EMBL/GenBank/DDBJ databases">
        <title>Complete sequence of chromosome of Nitrobacter hamburgensis X14.</title>
        <authorList>
            <consortium name="US DOE Joint Genome Institute"/>
            <person name="Copeland A."/>
            <person name="Lucas S."/>
            <person name="Lapidus A."/>
            <person name="Barry K."/>
            <person name="Detter J.C."/>
            <person name="Glavina del Rio T."/>
            <person name="Hammon N."/>
            <person name="Israni S."/>
            <person name="Dalin E."/>
            <person name="Tice H."/>
            <person name="Pitluck S."/>
            <person name="Chain P."/>
            <person name="Malfatti S."/>
            <person name="Shin M."/>
            <person name="Vergez L."/>
            <person name="Schmutz J."/>
            <person name="Larimer F."/>
            <person name="Land M."/>
            <person name="Hauser L."/>
            <person name="Kyrpides N."/>
            <person name="Ivanova N."/>
            <person name="Ward B."/>
            <person name="Arp D."/>
            <person name="Klotz M."/>
            <person name="Stein L."/>
            <person name="O'Mullan G."/>
            <person name="Starkenburg S."/>
            <person name="Sayavedra L."/>
            <person name="Poret-Peterson A.T."/>
            <person name="Gentry M.E."/>
            <person name="Bruce D."/>
            <person name="Richardson P."/>
        </authorList>
    </citation>
    <scope>NUCLEOTIDE SEQUENCE [LARGE SCALE GENOMIC DNA]</scope>
    <source>
        <strain>DSM 10229 / NCIMB 13809 / X14</strain>
    </source>
</reference>
<comment type="function">
    <text evidence="1">Involved in the glycolate utilization. Catalyzes the condensation and subsequent hydrolysis of acetyl-coenzyme A (acetyl-CoA) and glyoxylate to form malate and CoA.</text>
</comment>
<comment type="catalytic activity">
    <reaction evidence="1">
        <text>glyoxylate + acetyl-CoA + H2O = (S)-malate + CoA + H(+)</text>
        <dbReference type="Rhea" id="RHEA:18181"/>
        <dbReference type="ChEBI" id="CHEBI:15377"/>
        <dbReference type="ChEBI" id="CHEBI:15378"/>
        <dbReference type="ChEBI" id="CHEBI:15589"/>
        <dbReference type="ChEBI" id="CHEBI:36655"/>
        <dbReference type="ChEBI" id="CHEBI:57287"/>
        <dbReference type="ChEBI" id="CHEBI:57288"/>
        <dbReference type="EC" id="2.3.3.9"/>
    </reaction>
</comment>
<comment type="cofactor">
    <cofactor evidence="1">
        <name>Mg(2+)</name>
        <dbReference type="ChEBI" id="CHEBI:18420"/>
    </cofactor>
</comment>
<comment type="pathway">
    <text evidence="1">Carbohydrate metabolism; glyoxylate cycle; (S)-malate from isocitrate: step 2/2.</text>
</comment>
<comment type="subunit">
    <text evidence="1">Monomer.</text>
</comment>
<comment type="subcellular location">
    <subcellularLocation>
        <location evidence="1">Cytoplasm</location>
    </subcellularLocation>
</comment>
<comment type="similarity">
    <text evidence="1">Belongs to the malate synthase family. GlcB subfamily.</text>
</comment>
<name>MASZ_NITHX</name>
<feature type="chain" id="PRO_1000056913" description="Malate synthase G">
    <location>
        <begin position="1"/>
        <end position="727"/>
    </location>
</feature>
<feature type="active site" description="Proton acceptor" evidence="1">
    <location>
        <position position="337"/>
    </location>
</feature>
<feature type="active site" description="Proton donor" evidence="1">
    <location>
        <position position="628"/>
    </location>
</feature>
<feature type="binding site" evidence="1">
    <location>
        <position position="117"/>
    </location>
    <ligand>
        <name>acetyl-CoA</name>
        <dbReference type="ChEBI" id="CHEBI:57288"/>
    </ligand>
</feature>
<feature type="binding site" evidence="1">
    <location>
        <begin position="124"/>
        <end position="125"/>
    </location>
    <ligand>
        <name>acetyl-CoA</name>
        <dbReference type="ChEBI" id="CHEBI:57288"/>
    </ligand>
</feature>
<feature type="binding site" evidence="1">
    <location>
        <position position="273"/>
    </location>
    <ligand>
        <name>acetyl-CoA</name>
        <dbReference type="ChEBI" id="CHEBI:57288"/>
    </ligand>
</feature>
<feature type="binding site" evidence="1">
    <location>
        <position position="310"/>
    </location>
    <ligand>
        <name>acetyl-CoA</name>
        <dbReference type="ChEBI" id="CHEBI:57288"/>
    </ligand>
</feature>
<feature type="binding site" evidence="1">
    <location>
        <position position="337"/>
    </location>
    <ligand>
        <name>glyoxylate</name>
        <dbReference type="ChEBI" id="CHEBI:36655"/>
    </ligand>
</feature>
<feature type="binding site" evidence="1">
    <location>
        <position position="429"/>
    </location>
    <ligand>
        <name>glyoxylate</name>
        <dbReference type="ChEBI" id="CHEBI:36655"/>
    </ligand>
</feature>
<feature type="binding site" evidence="1">
    <location>
        <position position="429"/>
    </location>
    <ligand>
        <name>Mg(2+)</name>
        <dbReference type="ChEBI" id="CHEBI:18420"/>
    </ligand>
</feature>
<feature type="binding site" evidence="1">
    <location>
        <begin position="454"/>
        <end position="457"/>
    </location>
    <ligand>
        <name>glyoxylate</name>
        <dbReference type="ChEBI" id="CHEBI:36655"/>
    </ligand>
</feature>
<feature type="binding site" evidence="1">
    <location>
        <position position="457"/>
    </location>
    <ligand>
        <name>Mg(2+)</name>
        <dbReference type="ChEBI" id="CHEBI:18420"/>
    </ligand>
</feature>
<feature type="binding site" evidence="1">
    <location>
        <position position="538"/>
    </location>
    <ligand>
        <name>acetyl-CoA</name>
        <dbReference type="ChEBI" id="CHEBI:57288"/>
    </ligand>
</feature>
<feature type="modified residue" description="Cysteine sulfenic acid (-SOH)" evidence="1">
    <location>
        <position position="614"/>
    </location>
</feature>
<gene>
    <name evidence="1" type="primary">glcB</name>
    <name type="ordered locus">Nham_3565</name>
</gene>
<proteinExistence type="inferred from homology"/>
<dbReference type="EC" id="2.3.3.9" evidence="1"/>
<dbReference type="EMBL" id="CP000319">
    <property type="protein sequence ID" value="ABE64294.1"/>
    <property type="molecule type" value="Genomic_DNA"/>
</dbReference>
<dbReference type="RefSeq" id="WP_011511935.1">
    <property type="nucleotide sequence ID" value="NC_007964.1"/>
</dbReference>
<dbReference type="SMR" id="Q1QHK3"/>
<dbReference type="STRING" id="323097.Nham_3565"/>
<dbReference type="KEGG" id="nha:Nham_3565"/>
<dbReference type="eggNOG" id="COG2225">
    <property type="taxonomic scope" value="Bacteria"/>
</dbReference>
<dbReference type="HOGENOM" id="CLU_028446_1_0_5"/>
<dbReference type="OrthoDB" id="9762054at2"/>
<dbReference type="UniPathway" id="UPA00703">
    <property type="reaction ID" value="UER00720"/>
</dbReference>
<dbReference type="Proteomes" id="UP000001953">
    <property type="component" value="Chromosome"/>
</dbReference>
<dbReference type="GO" id="GO:0005829">
    <property type="term" value="C:cytosol"/>
    <property type="evidence" value="ECO:0007669"/>
    <property type="project" value="TreeGrafter"/>
</dbReference>
<dbReference type="GO" id="GO:0000287">
    <property type="term" value="F:magnesium ion binding"/>
    <property type="evidence" value="ECO:0007669"/>
    <property type="project" value="TreeGrafter"/>
</dbReference>
<dbReference type="GO" id="GO:0004474">
    <property type="term" value="F:malate synthase activity"/>
    <property type="evidence" value="ECO:0007669"/>
    <property type="project" value="UniProtKB-UniRule"/>
</dbReference>
<dbReference type="GO" id="GO:0009436">
    <property type="term" value="P:glyoxylate catabolic process"/>
    <property type="evidence" value="ECO:0007669"/>
    <property type="project" value="TreeGrafter"/>
</dbReference>
<dbReference type="GO" id="GO:0006097">
    <property type="term" value="P:glyoxylate cycle"/>
    <property type="evidence" value="ECO:0007669"/>
    <property type="project" value="UniProtKB-UniRule"/>
</dbReference>
<dbReference type="GO" id="GO:0006099">
    <property type="term" value="P:tricarboxylic acid cycle"/>
    <property type="evidence" value="ECO:0007669"/>
    <property type="project" value="UniProtKB-KW"/>
</dbReference>
<dbReference type="FunFam" id="3.20.20.360:FF:000002">
    <property type="entry name" value="Malate synthase G"/>
    <property type="match status" value="1"/>
</dbReference>
<dbReference type="Gene3D" id="3.20.20.360">
    <property type="entry name" value="Malate synthase, domain 3"/>
    <property type="match status" value="2"/>
</dbReference>
<dbReference type="Gene3D" id="1.20.1220.12">
    <property type="entry name" value="Malate synthase, domain III"/>
    <property type="match status" value="1"/>
</dbReference>
<dbReference type="HAMAP" id="MF_00641">
    <property type="entry name" value="Malate_synth_G"/>
    <property type="match status" value="1"/>
</dbReference>
<dbReference type="InterPro" id="IPR044856">
    <property type="entry name" value="Malate_synth_C_sf"/>
</dbReference>
<dbReference type="InterPro" id="IPR011076">
    <property type="entry name" value="Malate_synth_sf"/>
</dbReference>
<dbReference type="InterPro" id="IPR001465">
    <property type="entry name" value="Malate_synthase_TIM"/>
</dbReference>
<dbReference type="InterPro" id="IPR006253">
    <property type="entry name" value="Malate_synthG"/>
</dbReference>
<dbReference type="InterPro" id="IPR048355">
    <property type="entry name" value="MS_C"/>
</dbReference>
<dbReference type="InterPro" id="IPR048356">
    <property type="entry name" value="MS_N"/>
</dbReference>
<dbReference type="InterPro" id="IPR046363">
    <property type="entry name" value="MS_N_TIM-barrel_dom"/>
</dbReference>
<dbReference type="InterPro" id="IPR048357">
    <property type="entry name" value="MSG_insertion"/>
</dbReference>
<dbReference type="NCBIfam" id="TIGR01345">
    <property type="entry name" value="malate_syn_G"/>
    <property type="match status" value="1"/>
</dbReference>
<dbReference type="NCBIfam" id="NF002825">
    <property type="entry name" value="PRK02999.1"/>
    <property type="match status" value="1"/>
</dbReference>
<dbReference type="PANTHER" id="PTHR42739">
    <property type="entry name" value="MALATE SYNTHASE G"/>
    <property type="match status" value="1"/>
</dbReference>
<dbReference type="PANTHER" id="PTHR42739:SF1">
    <property type="entry name" value="MALATE SYNTHASE G"/>
    <property type="match status" value="1"/>
</dbReference>
<dbReference type="Pfam" id="PF20659">
    <property type="entry name" value="MS_C"/>
    <property type="match status" value="1"/>
</dbReference>
<dbReference type="Pfam" id="PF20656">
    <property type="entry name" value="MS_N"/>
    <property type="match status" value="1"/>
</dbReference>
<dbReference type="Pfam" id="PF01274">
    <property type="entry name" value="MS_TIM-barrel"/>
    <property type="match status" value="1"/>
</dbReference>
<dbReference type="Pfam" id="PF20658">
    <property type="entry name" value="MSG_insertion"/>
    <property type="match status" value="1"/>
</dbReference>
<dbReference type="SUPFAM" id="SSF51645">
    <property type="entry name" value="Malate synthase G"/>
    <property type="match status" value="1"/>
</dbReference>
<evidence type="ECO:0000255" key="1">
    <source>
        <dbReference type="HAMAP-Rule" id="MF_00641"/>
    </source>
</evidence>
<keyword id="KW-0963">Cytoplasm</keyword>
<keyword id="KW-0329">Glyoxylate bypass</keyword>
<keyword id="KW-0460">Magnesium</keyword>
<keyword id="KW-0479">Metal-binding</keyword>
<keyword id="KW-0558">Oxidation</keyword>
<keyword id="KW-1185">Reference proteome</keyword>
<keyword id="KW-0808">Transferase</keyword>
<keyword id="KW-0816">Tricarboxylic acid cycle</keyword>
<accession>Q1QHK3</accession>